<evidence type="ECO:0000250" key="1"/>
<evidence type="ECO:0000255" key="2"/>
<evidence type="ECO:0000269" key="3">
    <source>
    </source>
</evidence>
<evidence type="ECO:0000269" key="4">
    <source>
    </source>
</evidence>
<evidence type="ECO:0000269" key="5">
    <source>
    </source>
</evidence>
<evidence type="ECO:0000269" key="6">
    <source>
    </source>
</evidence>
<evidence type="ECO:0000269" key="7">
    <source>
    </source>
</evidence>
<keyword id="KW-0165">Cleavage on pair of basic residues</keyword>
<keyword id="KW-0175">Coiled coil</keyword>
<keyword id="KW-1169">Fusion of virus membrane with host cell membrane</keyword>
<keyword id="KW-1168">Fusion of virus membrane with host membrane</keyword>
<keyword id="KW-0325">Glycoprotein</keyword>
<keyword id="KW-0945">Host-virus interaction</keyword>
<keyword id="KW-0472">Membrane</keyword>
<keyword id="KW-0553">Oncogene</keyword>
<keyword id="KW-0732">Signal</keyword>
<keyword id="KW-0812">Transmembrane</keyword>
<keyword id="KW-1133">Transmembrane helix</keyword>
<keyword id="KW-1161">Viral attachment to host cell</keyword>
<keyword id="KW-1234">Viral attachment to host entry receptor</keyword>
<keyword id="KW-0261">Viral envelope protein</keyword>
<keyword id="KW-1162">Viral penetration into host cytoplasm</keyword>
<keyword id="KW-0946">Virion</keyword>
<keyword id="KW-1160">Virus entry into host cell</keyword>
<organismHost>
    <name type="scientific">Ovis aries</name>
    <name type="common">Sheep</name>
    <dbReference type="NCBI Taxonomy" id="9940"/>
</organismHost>
<proteinExistence type="evidence at protein level"/>
<accession>P31621</accession>
<name>ENV_JSRV</name>
<dbReference type="EMBL" id="M80216">
    <property type="protein sequence ID" value="AAA89184.1"/>
    <property type="molecule type" value="Genomic_RNA"/>
</dbReference>
<dbReference type="PIR" id="E42740">
    <property type="entry name" value="VCMVJA"/>
</dbReference>
<dbReference type="RefSeq" id="NP_041188.1">
    <property type="nucleotide sequence ID" value="NC_001494.1"/>
</dbReference>
<dbReference type="GlyCosmos" id="P31621">
    <property type="glycosylation" value="6 sites, No reported glycans"/>
</dbReference>
<dbReference type="GeneID" id="1490021"/>
<dbReference type="KEGG" id="vg:1490021"/>
<dbReference type="OrthoDB" id="1416at10239"/>
<dbReference type="Proteomes" id="UP000007215">
    <property type="component" value="Genome"/>
</dbReference>
<dbReference type="GO" id="GO:0016020">
    <property type="term" value="C:membrane"/>
    <property type="evidence" value="ECO:0007669"/>
    <property type="project" value="UniProtKB-KW"/>
</dbReference>
<dbReference type="GO" id="GO:0019031">
    <property type="term" value="C:viral envelope"/>
    <property type="evidence" value="ECO:0007669"/>
    <property type="project" value="UniProtKB-KW"/>
</dbReference>
<dbReference type="GO" id="GO:0055036">
    <property type="term" value="C:virion membrane"/>
    <property type="evidence" value="ECO:0007669"/>
    <property type="project" value="UniProtKB-SubCell"/>
</dbReference>
<dbReference type="GO" id="GO:0019899">
    <property type="term" value="F:enzyme binding"/>
    <property type="evidence" value="ECO:0000353"/>
    <property type="project" value="UniProtKB"/>
</dbReference>
<dbReference type="GO" id="GO:0005198">
    <property type="term" value="F:structural molecule activity"/>
    <property type="evidence" value="ECO:0007669"/>
    <property type="project" value="InterPro"/>
</dbReference>
<dbReference type="GO" id="GO:0098670">
    <property type="term" value="P:entry receptor-mediated virion attachment to host cell"/>
    <property type="evidence" value="ECO:0007669"/>
    <property type="project" value="UniProtKB-KW"/>
</dbReference>
<dbReference type="GO" id="GO:0019064">
    <property type="term" value="P:fusion of virus membrane with host plasma membrane"/>
    <property type="evidence" value="ECO:0007669"/>
    <property type="project" value="UniProtKB-KW"/>
</dbReference>
<dbReference type="GO" id="GO:0046718">
    <property type="term" value="P:symbiont entry into host cell"/>
    <property type="evidence" value="ECO:0007669"/>
    <property type="project" value="UniProtKB-KW"/>
</dbReference>
<dbReference type="GO" id="GO:0016032">
    <property type="term" value="P:viral process"/>
    <property type="evidence" value="ECO:0000314"/>
    <property type="project" value="CACAO"/>
</dbReference>
<dbReference type="CDD" id="cd09909">
    <property type="entry name" value="HIV-1-like_HR1-HR2"/>
    <property type="match status" value="1"/>
</dbReference>
<dbReference type="InterPro" id="IPR000328">
    <property type="entry name" value="GP41-like"/>
</dbReference>
<dbReference type="InterPro" id="IPR051255">
    <property type="entry name" value="Retroviral_env_glycoprotein"/>
</dbReference>
<dbReference type="PANTHER" id="PTHR34313">
    <property type="entry name" value="ENDOGENOUS RETROVIRUS GROUP K MEMBER 113 ENV POLYPROTEIN-RELATED"/>
    <property type="match status" value="1"/>
</dbReference>
<dbReference type="PANTHER" id="PTHR34313:SF2">
    <property type="entry name" value="ENDOGENOUS RETROVIRUS GROUP K MEMBER 21 ENV POLYPROTEIN-LIKE"/>
    <property type="match status" value="1"/>
</dbReference>
<dbReference type="Pfam" id="PF00517">
    <property type="entry name" value="GP41"/>
    <property type="match status" value="1"/>
</dbReference>
<comment type="function">
    <text evidence="4 5 7">The envelope proteins induce cell transformation leading to ovine pulmonary adenocarcinoma (OPA), a contagious lung cancer of sheep and goat. They bind to the HYAL2 receptor for cell entry. Env proteins probably do not act as oncogenes by themselves, but may rather liberate an oncogenic factor that would normally be negatively regulated. One mechanism of transformation seems to involve activation of the phosphoinositide-3-OH kinase (PI3K)/Akt pathway but does not involve the virus receptor HYAL2, and the other seems to involve Env binding to HYAL2, HYAL2 degradation, and activation of the MST1R receptor tyrosine kinase, which is normally suppressed by HYAL2.</text>
</comment>
<comment type="subunit">
    <text evidence="3">Interacts with sheep HYAL2 receptor.</text>
</comment>
<comment type="subcellular location">
    <molecule>Surface protein</molecule>
    <subcellularLocation>
        <location evidence="1">Virion membrane</location>
        <topology evidence="1">Peripheral membrane protein</topology>
    </subcellularLocation>
    <text evidence="1">The surface protein is not anchored to the viral envelope, but associates with the extravirion surface through its binding to TM.</text>
</comment>
<comment type="subcellular location">
    <molecule>Transmembrane protein</molecule>
    <subcellularLocation>
        <location evidence="1">Virion membrane</location>
        <topology evidence="1">Single-pass type I membrane protein</topology>
    </subcellularLocation>
</comment>
<comment type="domain">
    <text evidence="6">Both SU and TM seem to be involved in efficient transformation. The cytoplasmic tail of TM is necessary for the transformation.</text>
</comment>
<protein>
    <recommendedName>
        <fullName>Envelope glycoprotein</fullName>
    </recommendedName>
    <alternativeName>
        <fullName>Env polyprotein</fullName>
    </alternativeName>
    <component>
        <recommendedName>
            <fullName>Surface protein</fullName>
            <shortName>SU</shortName>
        </recommendedName>
        <alternativeName>
            <fullName>Glycoprotein 52</fullName>
            <shortName>gp52</shortName>
        </alternativeName>
    </component>
    <component>
        <recommendedName>
            <fullName>Transmembrane protein</fullName>
            <shortName>TM</shortName>
        </recommendedName>
        <alternativeName>
            <fullName>Glycoprotein 36</fullName>
            <shortName>gp36</shortName>
        </alternativeName>
    </component>
</protein>
<organism>
    <name type="scientific">Sheep pulmonary adenomatosis virus</name>
    <name type="common">Jaagsiekte sheep retrovirus</name>
    <name type="synonym">JSRV</name>
    <dbReference type="NCBI Taxonomy" id="11746"/>
    <lineage>
        <taxon>Viruses</taxon>
        <taxon>Riboviria</taxon>
        <taxon>Pararnavirae</taxon>
        <taxon>Artverviricota</taxon>
        <taxon>Revtraviricetes</taxon>
        <taxon>Ortervirales</taxon>
        <taxon>Retroviridae</taxon>
        <taxon>Orthoretrovirinae</taxon>
        <taxon>Betaretrovirus</taxon>
    </lineage>
</organism>
<gene>
    <name type="primary">env</name>
</gene>
<feature type="signal peptide" evidence="2">
    <location>
        <begin position="1"/>
        <end position="84"/>
    </location>
</feature>
<feature type="chain" id="PRO_0000239241" description="Envelope glycoprotein">
    <location>
        <begin position="85"/>
        <end position="615"/>
    </location>
</feature>
<feature type="chain" id="PRO_0000040737" description="Surface protein" evidence="2">
    <location>
        <begin position="85"/>
        <end position="378"/>
    </location>
</feature>
<feature type="chain" id="PRO_0000040738" description="Transmembrane protein" evidence="2">
    <location>
        <begin position="379"/>
        <end position="615"/>
    </location>
</feature>
<feature type="topological domain" description="Extracellular" evidence="2">
    <location>
        <begin position="85"/>
        <end position="378"/>
    </location>
</feature>
<feature type="transmembrane region" description="Helical" evidence="2">
    <location>
        <begin position="379"/>
        <end position="402"/>
    </location>
</feature>
<feature type="topological domain" description="Cytoplasmic" evidence="2">
    <location>
        <begin position="403"/>
        <end position="615"/>
    </location>
</feature>
<feature type="region of interest" description="Required for cell transformation">
    <location>
        <begin position="590"/>
        <end position="593"/>
    </location>
</feature>
<feature type="coiled-coil region" evidence="2">
    <location>
        <begin position="411"/>
        <end position="461"/>
    </location>
</feature>
<feature type="coiled-coil region" evidence="2">
    <location>
        <begin position="495"/>
        <end position="531"/>
    </location>
</feature>
<feature type="glycosylation site" description="N-linked (GlcNAc...) asparagine; by host" evidence="2">
    <location>
        <position position="108"/>
    </location>
</feature>
<feature type="glycosylation site" description="N-linked (GlcNAc...) asparagine; by host" evidence="2">
    <location>
        <position position="127"/>
    </location>
</feature>
<feature type="glycosylation site" description="N-linked (GlcNAc...) asparagine; by host" evidence="2">
    <location>
        <position position="178"/>
    </location>
</feature>
<feature type="glycosylation site" description="N-linked (GlcNAc...) asparagine; by host" evidence="2">
    <location>
        <position position="219"/>
    </location>
</feature>
<feature type="glycosylation site" description="N-linked (GlcNAc...) asparagine; by host" evidence="2">
    <location>
        <position position="275"/>
    </location>
</feature>
<feature type="glycosylation site" description="N-linked (GlcNAc...) asparagine; by host" evidence="2">
    <location>
        <position position="319"/>
    </location>
</feature>
<reference key="1">
    <citation type="journal article" date="1992" name="J. Virol.">
        <title>Nucleotide sequence of the jaagsiekte retrovirus, an exogenous and endogenous type D and B retrovirus of sheep and goats.</title>
        <authorList>
            <person name="York D.F."/>
            <person name="Vigne R."/>
            <person name="Verwoerd D.W."/>
            <person name="Querat G."/>
        </authorList>
    </citation>
    <scope>NUCLEOTIDE SEQUENCE [GENOMIC RNA]</scope>
</reference>
<reference key="2">
    <citation type="journal article" date="2001" name="Proc. Natl. Acad. Sci. U.S.A.">
        <title>Candidate tumor suppressor HYAL2 is a glycosylphosphatidylinositol (GPI)-anchored cell-surface receptor for jaagsiekte sheep retrovirus, the envelope protein of which mediates oncogenic transformation.</title>
        <authorList>
            <person name="Rai S.K."/>
            <person name="Duh F.-M."/>
            <person name="Vigdorovich V."/>
            <person name="Danilkovitch-Miagkova A."/>
            <person name="Lerman M.I."/>
            <person name="Miller A.D."/>
        </authorList>
    </citation>
    <scope>INTERACTION WITH SHEEP HYAL2 RECEPTOR</scope>
</reference>
<reference key="3">
    <citation type="journal article" date="2002" name="J. Virol.">
        <title>Envelope-induced cell transformation by ovine betaretroviruses.</title>
        <authorList>
            <person name="Alberti A."/>
            <person name="Murgia C."/>
            <person name="Liu S.-L."/>
            <person name="Mura M."/>
            <person name="Cousens C."/>
            <person name="Sharp M."/>
            <person name="Miller A.D."/>
            <person name="Palmarini M."/>
        </authorList>
    </citation>
    <scope>FUNCTION</scope>
</reference>
<reference key="4">
    <citation type="journal article" date="2003" name="Proc. Natl. Acad. Sci. U.S.A.">
        <title>Hyaluronidase 2 negatively regulates RON receptor tyrosine kinase and mediates transformation of epithelial cells by jaagsiekte sheep retrovirus.</title>
        <authorList>
            <person name="Danilkovitch-Miagkova A."/>
            <person name="Duh F.-M."/>
            <person name="Kuzmin I."/>
            <person name="Angeloni D."/>
            <person name="Liu S.-L."/>
            <person name="Miller A.D."/>
            <person name="Lerman M.I."/>
        </authorList>
    </citation>
    <scope>FUNCTION</scope>
</reference>
<reference key="5">
    <citation type="journal article" date="2004" name="J. Virol.">
        <title>Multiple domains of the Jaagsiekte sheep retrovirus envelope protein are required for transformation of rodent fibroblasts.</title>
        <authorList>
            <person name="Hofacre A."/>
            <person name="Fan H."/>
        </authorList>
    </citation>
    <scope>DOMAIN</scope>
    <scope>SIGNAL SEQUENCE</scope>
</reference>
<reference key="6">
    <citation type="journal article" date="2005" name="J. Virol.">
        <title>Transformation of madin-darby canine kidney epithelial cells by sheep retrovirus envelope proteins.</title>
        <authorList>
            <person name="Liu S.-L."/>
            <person name="Miller A.D."/>
        </authorList>
    </citation>
    <scope>FUNCTION</scope>
</reference>
<sequence>MPKRRAGFRKGWYARQRNSLTHQMQRMTLSEPTSELPTQRQIEALMPYAWNEAHVQPPVTPTNILIMLLLLLQRVQNGAAAAFWAYIPDPPMIQSLGWDREIVPVYVNDTSLLGGKSDIHISPQQANISFYGLTTQYPMCFSYQSQHPHCIQVSADISYPRVTISGIDEKTGKKSYGNGTGPLDIPFCDKHLSIGIGIDTPWTLCRARVASVYNINNANATFLWDWAPGGTPDFPEYRGQHPPIFSVNTAPIYQTELWKLLAAFGHGNSLYLQPNISGTKYGDVGVTGFLYPRACVPYPFMLIQGHMEITLSLNIYHLNCSNCILTNCIRGVAKGEQVIIVKQPAFVMLPVEIAEAWYDETALELLQRINTALSRPKRGLSLIILGIVSLITLIATAVTACVSLAQSIQAAHTVDSLSYNVTKVMGTQEDIDKKIEDRLSALYDVVRVLGEQVQSINFRMKIQCHANYKWICVTKKPYNTSDFPWDKVKKHLQGIWFNTNLSLDLLQLHNEILDIENSPKATLNIADTVDNFLQNLFSNFPSLHSLWKTLIGLGIFVIIIAIVIFVFPCVVRGLVRDFLKMRVEMLHMKYRTMLQHRHLMELLKNKERGAAGDDP</sequence>